<reference key="1">
    <citation type="journal article" date="2002" name="Nature">
        <title>The genome sequence of Schizosaccharomyces pombe.</title>
        <authorList>
            <person name="Wood V."/>
            <person name="Gwilliam R."/>
            <person name="Rajandream M.A."/>
            <person name="Lyne M.H."/>
            <person name="Lyne R."/>
            <person name="Stewart A."/>
            <person name="Sgouros J.G."/>
            <person name="Peat N."/>
            <person name="Hayles J."/>
            <person name="Baker S.G."/>
            <person name="Basham D."/>
            <person name="Bowman S."/>
            <person name="Brooks K."/>
            <person name="Brown D."/>
            <person name="Brown S."/>
            <person name="Chillingworth T."/>
            <person name="Churcher C.M."/>
            <person name="Collins M."/>
            <person name="Connor R."/>
            <person name="Cronin A."/>
            <person name="Davis P."/>
            <person name="Feltwell T."/>
            <person name="Fraser A."/>
            <person name="Gentles S."/>
            <person name="Goble A."/>
            <person name="Hamlin N."/>
            <person name="Harris D.E."/>
            <person name="Hidalgo J."/>
            <person name="Hodgson G."/>
            <person name="Holroyd S."/>
            <person name="Hornsby T."/>
            <person name="Howarth S."/>
            <person name="Huckle E.J."/>
            <person name="Hunt S."/>
            <person name="Jagels K."/>
            <person name="James K.D."/>
            <person name="Jones L."/>
            <person name="Jones M."/>
            <person name="Leather S."/>
            <person name="McDonald S."/>
            <person name="McLean J."/>
            <person name="Mooney P."/>
            <person name="Moule S."/>
            <person name="Mungall K.L."/>
            <person name="Murphy L.D."/>
            <person name="Niblett D."/>
            <person name="Odell C."/>
            <person name="Oliver K."/>
            <person name="O'Neil S."/>
            <person name="Pearson D."/>
            <person name="Quail M.A."/>
            <person name="Rabbinowitsch E."/>
            <person name="Rutherford K.M."/>
            <person name="Rutter S."/>
            <person name="Saunders D."/>
            <person name="Seeger K."/>
            <person name="Sharp S."/>
            <person name="Skelton J."/>
            <person name="Simmonds M.N."/>
            <person name="Squares R."/>
            <person name="Squares S."/>
            <person name="Stevens K."/>
            <person name="Taylor K."/>
            <person name="Taylor R.G."/>
            <person name="Tivey A."/>
            <person name="Walsh S.V."/>
            <person name="Warren T."/>
            <person name="Whitehead S."/>
            <person name="Woodward J.R."/>
            <person name="Volckaert G."/>
            <person name="Aert R."/>
            <person name="Robben J."/>
            <person name="Grymonprez B."/>
            <person name="Weltjens I."/>
            <person name="Vanstreels E."/>
            <person name="Rieger M."/>
            <person name="Schaefer M."/>
            <person name="Mueller-Auer S."/>
            <person name="Gabel C."/>
            <person name="Fuchs M."/>
            <person name="Duesterhoeft A."/>
            <person name="Fritzc C."/>
            <person name="Holzer E."/>
            <person name="Moestl D."/>
            <person name="Hilbert H."/>
            <person name="Borzym K."/>
            <person name="Langer I."/>
            <person name="Beck A."/>
            <person name="Lehrach H."/>
            <person name="Reinhardt R."/>
            <person name="Pohl T.M."/>
            <person name="Eger P."/>
            <person name="Zimmermann W."/>
            <person name="Wedler H."/>
            <person name="Wambutt R."/>
            <person name="Purnelle B."/>
            <person name="Goffeau A."/>
            <person name="Cadieu E."/>
            <person name="Dreano S."/>
            <person name="Gloux S."/>
            <person name="Lelaure V."/>
            <person name="Mottier S."/>
            <person name="Galibert F."/>
            <person name="Aves S.J."/>
            <person name="Xiang Z."/>
            <person name="Hunt C."/>
            <person name="Moore K."/>
            <person name="Hurst S.M."/>
            <person name="Lucas M."/>
            <person name="Rochet M."/>
            <person name="Gaillardin C."/>
            <person name="Tallada V.A."/>
            <person name="Garzon A."/>
            <person name="Thode G."/>
            <person name="Daga R.R."/>
            <person name="Cruzado L."/>
            <person name="Jimenez J."/>
            <person name="Sanchez M."/>
            <person name="del Rey F."/>
            <person name="Benito J."/>
            <person name="Dominguez A."/>
            <person name="Revuelta J.L."/>
            <person name="Moreno S."/>
            <person name="Armstrong J."/>
            <person name="Forsburg S.L."/>
            <person name="Cerutti L."/>
            <person name="Lowe T."/>
            <person name="McCombie W.R."/>
            <person name="Paulsen I."/>
            <person name="Potashkin J."/>
            <person name="Shpakovski G.V."/>
            <person name="Ussery D."/>
            <person name="Barrell B.G."/>
            <person name="Nurse P."/>
        </authorList>
    </citation>
    <scope>NUCLEOTIDE SEQUENCE [LARGE SCALE GENOMIC DNA]</scope>
    <source>
        <strain>972 / ATCC 24843</strain>
    </source>
</reference>
<reference key="2">
    <citation type="journal article" date="2006" name="Nat. Biotechnol.">
        <title>ORFeome cloning and global analysis of protein localization in the fission yeast Schizosaccharomyces pombe.</title>
        <authorList>
            <person name="Matsuyama A."/>
            <person name="Arai R."/>
            <person name="Yashiroda Y."/>
            <person name="Shirai A."/>
            <person name="Kamata A."/>
            <person name="Sekido S."/>
            <person name="Kobayashi Y."/>
            <person name="Hashimoto A."/>
            <person name="Hamamoto M."/>
            <person name="Hiraoka Y."/>
            <person name="Horinouchi S."/>
            <person name="Yoshida M."/>
        </authorList>
    </citation>
    <scope>SUBCELLULAR LOCATION [LARGE SCALE ANALYSIS]</scope>
</reference>
<reference key="3">
    <citation type="journal article" date="2010" name="Mol. Cell">
        <title>A histone-fold complex and FANCM form a conserved DNA-remodeling complex to maintain genome stability.</title>
        <authorList>
            <person name="Yan Z."/>
            <person name="Delannoy M."/>
            <person name="Ling C."/>
            <person name="Daee D."/>
            <person name="Osman F."/>
            <person name="Muniandy P.A."/>
            <person name="Shen X."/>
            <person name="Oostra A.B."/>
            <person name="Du H."/>
            <person name="Steltenpool J."/>
            <person name="Lin T."/>
            <person name="Schuster B."/>
            <person name="Decaillet C."/>
            <person name="Stasiak A."/>
            <person name="Stasiak A.Z."/>
            <person name="Stone S."/>
            <person name="Hoatlin M.E."/>
            <person name="Schindler D."/>
            <person name="Woodcock C.L."/>
            <person name="Joenje H."/>
            <person name="Sen R."/>
            <person name="de Winter J.P."/>
            <person name="Li L."/>
            <person name="Seidman M.M."/>
            <person name="Whitby M.C."/>
            <person name="Myung K."/>
            <person name="Constantinousend A."/>
            <person name="Wang W."/>
        </authorList>
    </citation>
    <scope>FUNCTION</scope>
</reference>
<reference key="4">
    <citation type="journal article" date="2012" name="Science">
        <title>The fission yeast FANCM ortholog directs non-crossover recombination during meiosis.</title>
        <authorList>
            <person name="Lorenz A."/>
            <person name="Osman F."/>
            <person name="Sun W."/>
            <person name="Nandi S."/>
            <person name="Steinacher R."/>
            <person name="Whitby M.C."/>
        </authorList>
    </citation>
    <scope>FUNCTION</scope>
</reference>
<reference key="5">
    <citation type="journal article" date="2013" name="Open Biol.">
        <title>MHF1-2/CENP-S-X performs distinct roles in centromere metabolism and genetic recombination.</title>
        <authorList>
            <person name="Bhattacharjee S."/>
            <person name="Osman F."/>
            <person name="Feeney L."/>
            <person name="Lorenz A."/>
            <person name="Bryer C."/>
            <person name="Whitby M.C."/>
        </authorList>
    </citation>
    <scope>RETRACTED PAPER</scope>
</reference>
<reference key="6">
    <citation type="journal article" date="2018" name="Open Biol.">
        <authorList>
            <person name="Bhattacharjee S."/>
            <person name="Osman F."/>
            <person name="Feeney L."/>
            <person name="Lorenz A."/>
            <person name="Bryer C."/>
            <person name="Whitby M.C."/>
        </authorList>
    </citation>
    <scope>RETRACTION NOTICE OF PUBMED:24026537</scope>
</reference>
<feature type="chain" id="PRO_0000372347" description="Inner kinetochore subunit mhf2">
    <location>
        <begin position="1"/>
        <end position="89"/>
    </location>
</feature>
<organism>
    <name type="scientific">Schizosaccharomyces pombe (strain 972 / ATCC 24843)</name>
    <name type="common">Fission yeast</name>
    <dbReference type="NCBI Taxonomy" id="284812"/>
    <lineage>
        <taxon>Eukaryota</taxon>
        <taxon>Fungi</taxon>
        <taxon>Dikarya</taxon>
        <taxon>Ascomycota</taxon>
        <taxon>Taphrinomycotina</taxon>
        <taxon>Schizosaccharomycetes</taxon>
        <taxon>Schizosaccharomycetales</taxon>
        <taxon>Schizosaccharomycetaceae</taxon>
        <taxon>Schizosaccharomyces</taxon>
    </lineage>
</organism>
<proteinExistence type="inferred from homology"/>
<protein>
    <recommendedName>
        <fullName>Inner kinetochore subunit mhf2</fullName>
    </recommendedName>
    <alternativeName>
        <fullName>CENP-X homolog</fullName>
    </alternativeName>
    <alternativeName>
        <fullName>Constitutive centromere-associated network protein mhf2</fullName>
    </alternativeName>
    <alternativeName>
        <fullName evidence="6">MHF histone-fold complex subunit 2</fullName>
    </alternativeName>
</protein>
<name>CENPX_SCHPO</name>
<keyword id="KW-0963">Cytoplasm</keyword>
<keyword id="KW-0227">DNA damage</keyword>
<keyword id="KW-0233">DNA recombination</keyword>
<keyword id="KW-0234">DNA repair</keyword>
<keyword id="KW-0238">DNA-binding</keyword>
<keyword id="KW-0469">Meiosis</keyword>
<keyword id="KW-0539">Nucleus</keyword>
<keyword id="KW-1185">Reference proteome</keyword>
<sequence length="89" mass="10051">MEQESELLSLNTLARILTLYFSSEKGTKITPSALELITQYLRIYSKEAVCRAYEEKKNSIMSSSENEDIVLELEDLENGIAAQLALDFS</sequence>
<accession>O74896</accession>
<dbReference type="EMBL" id="CU329672">
    <property type="protein sequence ID" value="CAA21191.1"/>
    <property type="molecule type" value="Genomic_DNA"/>
</dbReference>
<dbReference type="PIR" id="T41422">
    <property type="entry name" value="T41422"/>
</dbReference>
<dbReference type="RefSeq" id="NP_588439.1">
    <property type="nucleotide sequence ID" value="NM_001023430.2"/>
</dbReference>
<dbReference type="SMR" id="O74896"/>
<dbReference type="BioGRID" id="275973">
    <property type="interactions" value="61"/>
</dbReference>
<dbReference type="FunCoup" id="O74896">
    <property type="interactions" value="15"/>
</dbReference>
<dbReference type="STRING" id="284812.O74896"/>
<dbReference type="iPTMnet" id="O74896"/>
<dbReference type="PaxDb" id="4896-SPCC576.12c.1"/>
<dbReference type="EnsemblFungi" id="SPCC576.12c.1">
    <property type="protein sequence ID" value="SPCC576.12c.1:pep"/>
    <property type="gene ID" value="SPCC576.12c"/>
</dbReference>
<dbReference type="GeneID" id="2539408"/>
<dbReference type="KEGG" id="spo:2539408"/>
<dbReference type="PomBase" id="SPCC576.12c">
    <property type="gene designation" value="mhf2"/>
</dbReference>
<dbReference type="VEuPathDB" id="FungiDB:SPCC576.12c"/>
<dbReference type="eggNOG" id="ENOG502S98G">
    <property type="taxonomic scope" value="Eukaryota"/>
</dbReference>
<dbReference type="HOGENOM" id="CLU_2470378_0_0_1"/>
<dbReference type="InParanoid" id="O74896"/>
<dbReference type="OMA" id="YTKEAVC"/>
<dbReference type="PhylomeDB" id="O74896"/>
<dbReference type="PRO" id="PR:O74896"/>
<dbReference type="Proteomes" id="UP000002485">
    <property type="component" value="Chromosome III"/>
</dbReference>
<dbReference type="GO" id="GO:0061838">
    <property type="term" value="C:CENP-T-W-S-X complex"/>
    <property type="evidence" value="ECO:0000304"/>
    <property type="project" value="PomBase"/>
</dbReference>
<dbReference type="GO" id="GO:0005829">
    <property type="term" value="C:cytosol"/>
    <property type="evidence" value="ECO:0007005"/>
    <property type="project" value="PomBase"/>
</dbReference>
<dbReference type="GO" id="GO:0071821">
    <property type="term" value="C:FANCM-MHF complex"/>
    <property type="evidence" value="ECO:0000353"/>
    <property type="project" value="PomBase"/>
</dbReference>
<dbReference type="GO" id="GO:0005634">
    <property type="term" value="C:nucleus"/>
    <property type="evidence" value="ECO:0007005"/>
    <property type="project" value="PomBase"/>
</dbReference>
<dbReference type="GO" id="GO:0003677">
    <property type="term" value="F:DNA binding"/>
    <property type="evidence" value="ECO:0007669"/>
    <property type="project" value="UniProtKB-KW"/>
</dbReference>
<dbReference type="GO" id="GO:0046982">
    <property type="term" value="F:protein heterodimerization activity"/>
    <property type="evidence" value="ECO:0007669"/>
    <property type="project" value="InterPro"/>
</dbReference>
<dbReference type="GO" id="GO:0045003">
    <property type="term" value="P:double-strand break repair via synthesis-dependent strand annealing"/>
    <property type="evidence" value="ECO:0000315"/>
    <property type="project" value="PomBase"/>
</dbReference>
<dbReference type="GO" id="GO:0051382">
    <property type="term" value="P:kinetochore assembly"/>
    <property type="evidence" value="ECO:0007669"/>
    <property type="project" value="InterPro"/>
</dbReference>
<dbReference type="GO" id="GO:0031297">
    <property type="term" value="P:replication fork processing"/>
    <property type="evidence" value="ECO:0000316"/>
    <property type="project" value="PomBase"/>
</dbReference>
<dbReference type="GO" id="GO:0000712">
    <property type="term" value="P:resolution of meiotic recombination intermediates"/>
    <property type="evidence" value="ECO:0000316"/>
    <property type="project" value="PomBase"/>
</dbReference>
<dbReference type="CDD" id="cd22921">
    <property type="entry name" value="HFD_CENP-X"/>
    <property type="match status" value="1"/>
</dbReference>
<dbReference type="FunFam" id="1.10.20.10:FF:000139">
    <property type="entry name" value="AaceriACL158Wp"/>
    <property type="match status" value="1"/>
</dbReference>
<dbReference type="Gene3D" id="1.10.20.10">
    <property type="entry name" value="Histone, subunit A"/>
    <property type="match status" value="1"/>
</dbReference>
<dbReference type="InterPro" id="IPR018552">
    <property type="entry name" value="CENP-X"/>
</dbReference>
<dbReference type="InterPro" id="IPR009072">
    <property type="entry name" value="Histone-fold"/>
</dbReference>
<dbReference type="PANTHER" id="PTHR28680">
    <property type="entry name" value="CENTROMERE PROTEIN X"/>
    <property type="match status" value="1"/>
</dbReference>
<dbReference type="PANTHER" id="PTHR28680:SF1">
    <property type="entry name" value="CENTROMERE PROTEIN X"/>
    <property type="match status" value="1"/>
</dbReference>
<dbReference type="Pfam" id="PF09415">
    <property type="entry name" value="CENP-X"/>
    <property type="match status" value="1"/>
</dbReference>
<comment type="function">
    <text evidence="3 6">Component of a FANCM-MHF complex that promotes gene conversion at blocked replication forks, probably by reversal of the stalled fork (Probable). FANCM-MHF promotes non-crossover recombination (PubMed:22723423).</text>
</comment>
<comment type="subunit">
    <text evidence="1">The MHF histone-fold complex is a heterotetramer of 2 mhf1-mhf2 heterodimers (By similarity). Component of the inner kinetochore constitutive centromere-associated network (CCAN) (also known as central kinetochore Sim4 complex in fission yeast), which is composed of at least cnl2, cnp3, cnp20, fta1, fta2, fta3, fta4, fta6, fta7, mal2, mhf1, mhf2, mis6, mis15, mis17, sim4 and wip1 (By similarity).</text>
</comment>
<comment type="subcellular location">
    <subcellularLocation>
        <location evidence="2">Nucleus</location>
    </subcellularLocation>
    <subcellularLocation>
        <location evidence="2">Cytoplasm</location>
    </subcellularLocation>
</comment>
<comment type="similarity">
    <text evidence="5">Belongs to the CENP-X/MHF2 family.</text>
</comment>
<comment type="caution">
    <text evidence="7 8">An article showing that FANCM-MHF promotes gene conversion at blocked replication forks by fork reversal was withdrawn due to genotype mislabeling of strains. Following strain regeneration, although many phenotypes were not reproducible, the central observations of the publication were confirmed.</text>
</comment>
<evidence type="ECO:0000250" key="1">
    <source>
        <dbReference type="UniProtKB" id="Q3E835"/>
    </source>
</evidence>
<evidence type="ECO:0000269" key="2">
    <source>
    </source>
</evidence>
<evidence type="ECO:0000269" key="3">
    <source>
    </source>
</evidence>
<evidence type="ECO:0000303" key="4">
    <source>
    </source>
</evidence>
<evidence type="ECO:0000305" key="5"/>
<evidence type="ECO:0000305" key="6">
    <source>
    </source>
</evidence>
<evidence type="ECO:0000305" key="7">
    <source>
    </source>
</evidence>
<evidence type="ECO:0000305" key="8">
    <source>
    </source>
</evidence>
<evidence type="ECO:0000312" key="9">
    <source>
        <dbReference type="PomBase" id="SPCC576.12c"/>
    </source>
</evidence>
<gene>
    <name evidence="4" type="primary">mhf2</name>
    <name evidence="9" type="ORF">SPCC576.12c</name>
</gene>